<evidence type="ECO:0000255" key="1">
    <source>
        <dbReference type="HAMAP-Rule" id="MF_00114"/>
    </source>
</evidence>
<keyword id="KW-0963">Cytoplasm</keyword>
<keyword id="KW-0456">Lyase</keyword>
<keyword id="KW-1185">Reference proteome</keyword>
<keyword id="KW-0704">Schiff base</keyword>
<feature type="chain" id="PRO_1000015340" description="Deoxyribose-phosphate aldolase">
    <location>
        <begin position="1"/>
        <end position="224"/>
    </location>
</feature>
<feature type="active site" description="Proton donor/acceptor" evidence="1">
    <location>
        <position position="94"/>
    </location>
</feature>
<feature type="active site" description="Schiff-base intermediate with acetaldehyde" evidence="1">
    <location>
        <position position="156"/>
    </location>
</feature>
<feature type="active site" description="Proton donor/acceptor" evidence="1">
    <location>
        <position position="184"/>
    </location>
</feature>
<organism>
    <name type="scientific">Methanocella arvoryzae (strain DSM 22066 / NBRC 105507 / MRE50)</name>
    <dbReference type="NCBI Taxonomy" id="351160"/>
    <lineage>
        <taxon>Archaea</taxon>
        <taxon>Methanobacteriati</taxon>
        <taxon>Methanobacteriota</taxon>
        <taxon>Stenosarchaea group</taxon>
        <taxon>Methanomicrobia</taxon>
        <taxon>Methanocellales</taxon>
        <taxon>Methanocellaceae</taxon>
        <taxon>Methanocella</taxon>
    </lineage>
</organism>
<sequence length="224" mass="24207">MENRDIARLIDHTLLRPDATQEDIEKLCAEAVEYGFASVCTATCWTSFVREYLDAHNSPVKVCSVVGFPFGSALTDAKREETWDAVEYGADEIDMVINVGYLRSGMLDLFEKDIRTVVKVSGSAAVKVIIETCYLTDEQKVLAARTAKKCGAAFVKTSTGYGPSGARLEDVRLIREAVPDILIKASGGIRTYEQAKAFTEAGASRIGTSSGIAIVTGARGESSY</sequence>
<name>DEOC_METAR</name>
<gene>
    <name evidence="1" type="primary">deoC</name>
    <name type="ordered locus">UNCMA_22140</name>
    <name type="ORF">RCIX563</name>
</gene>
<dbReference type="EC" id="4.1.2.4" evidence="1"/>
<dbReference type="EMBL" id="AM114193">
    <property type="protein sequence ID" value="CAJ35971.1"/>
    <property type="molecule type" value="Genomic_DNA"/>
</dbReference>
<dbReference type="RefSeq" id="WP_012036534.1">
    <property type="nucleotide sequence ID" value="NC_009464.1"/>
</dbReference>
<dbReference type="SMR" id="Q0W6M2"/>
<dbReference type="STRING" id="351160.RCIX563"/>
<dbReference type="GeneID" id="5144972"/>
<dbReference type="KEGG" id="rci:RCIX563"/>
<dbReference type="PATRIC" id="fig|351160.9.peg.2263"/>
<dbReference type="eggNOG" id="arCOG04320">
    <property type="taxonomic scope" value="Archaea"/>
</dbReference>
<dbReference type="OrthoDB" id="31145at2157"/>
<dbReference type="UniPathway" id="UPA00002">
    <property type="reaction ID" value="UER00468"/>
</dbReference>
<dbReference type="Proteomes" id="UP000000663">
    <property type="component" value="Chromosome"/>
</dbReference>
<dbReference type="GO" id="GO:0005737">
    <property type="term" value="C:cytoplasm"/>
    <property type="evidence" value="ECO:0007669"/>
    <property type="project" value="UniProtKB-SubCell"/>
</dbReference>
<dbReference type="GO" id="GO:0004139">
    <property type="term" value="F:deoxyribose-phosphate aldolase activity"/>
    <property type="evidence" value="ECO:0007669"/>
    <property type="project" value="UniProtKB-UniRule"/>
</dbReference>
<dbReference type="GO" id="GO:0006018">
    <property type="term" value="P:2-deoxyribose 1-phosphate catabolic process"/>
    <property type="evidence" value="ECO:0007669"/>
    <property type="project" value="UniProtKB-UniRule"/>
</dbReference>
<dbReference type="GO" id="GO:0016052">
    <property type="term" value="P:carbohydrate catabolic process"/>
    <property type="evidence" value="ECO:0007669"/>
    <property type="project" value="TreeGrafter"/>
</dbReference>
<dbReference type="GO" id="GO:0009264">
    <property type="term" value="P:deoxyribonucleotide catabolic process"/>
    <property type="evidence" value="ECO:0007669"/>
    <property type="project" value="InterPro"/>
</dbReference>
<dbReference type="CDD" id="cd00959">
    <property type="entry name" value="DeoC"/>
    <property type="match status" value="1"/>
</dbReference>
<dbReference type="FunFam" id="3.20.20.70:FF:000044">
    <property type="entry name" value="Deoxyribose-phosphate aldolase"/>
    <property type="match status" value="1"/>
</dbReference>
<dbReference type="Gene3D" id="3.20.20.70">
    <property type="entry name" value="Aldolase class I"/>
    <property type="match status" value="1"/>
</dbReference>
<dbReference type="HAMAP" id="MF_00114">
    <property type="entry name" value="DeoC_type1"/>
    <property type="match status" value="1"/>
</dbReference>
<dbReference type="InterPro" id="IPR013785">
    <property type="entry name" value="Aldolase_TIM"/>
</dbReference>
<dbReference type="InterPro" id="IPR011343">
    <property type="entry name" value="DeoC"/>
</dbReference>
<dbReference type="InterPro" id="IPR002915">
    <property type="entry name" value="DeoC/FbaB/LacD_aldolase"/>
</dbReference>
<dbReference type="InterPro" id="IPR028581">
    <property type="entry name" value="DeoC_typeI"/>
</dbReference>
<dbReference type="NCBIfam" id="TIGR00126">
    <property type="entry name" value="deoC"/>
    <property type="match status" value="1"/>
</dbReference>
<dbReference type="PANTHER" id="PTHR10889">
    <property type="entry name" value="DEOXYRIBOSE-PHOSPHATE ALDOLASE"/>
    <property type="match status" value="1"/>
</dbReference>
<dbReference type="PANTHER" id="PTHR10889:SF1">
    <property type="entry name" value="DEOXYRIBOSE-PHOSPHATE ALDOLASE"/>
    <property type="match status" value="1"/>
</dbReference>
<dbReference type="Pfam" id="PF01791">
    <property type="entry name" value="DeoC"/>
    <property type="match status" value="1"/>
</dbReference>
<dbReference type="PIRSF" id="PIRSF001357">
    <property type="entry name" value="DeoC"/>
    <property type="match status" value="1"/>
</dbReference>
<dbReference type="SMART" id="SM01133">
    <property type="entry name" value="DeoC"/>
    <property type="match status" value="1"/>
</dbReference>
<dbReference type="SUPFAM" id="SSF51569">
    <property type="entry name" value="Aldolase"/>
    <property type="match status" value="1"/>
</dbReference>
<accession>Q0W6M2</accession>
<reference key="1">
    <citation type="journal article" date="2006" name="Science">
        <title>Genome of rice cluster I archaea -- the key methane producers in the rice rhizosphere.</title>
        <authorList>
            <person name="Erkel C."/>
            <person name="Kube M."/>
            <person name="Reinhardt R."/>
            <person name="Liesack W."/>
        </authorList>
    </citation>
    <scope>NUCLEOTIDE SEQUENCE [LARGE SCALE GENOMIC DNA]</scope>
    <source>
        <strain>DSM 22066 / NBRC 105507 / MRE50</strain>
    </source>
</reference>
<proteinExistence type="inferred from homology"/>
<comment type="function">
    <text evidence="1">Catalyzes a reversible aldol reaction between acetaldehyde and D-glyceraldehyde 3-phosphate to generate 2-deoxy-D-ribose 5-phosphate.</text>
</comment>
<comment type="catalytic activity">
    <reaction evidence="1">
        <text>2-deoxy-D-ribose 5-phosphate = D-glyceraldehyde 3-phosphate + acetaldehyde</text>
        <dbReference type="Rhea" id="RHEA:12821"/>
        <dbReference type="ChEBI" id="CHEBI:15343"/>
        <dbReference type="ChEBI" id="CHEBI:59776"/>
        <dbReference type="ChEBI" id="CHEBI:62877"/>
        <dbReference type="EC" id="4.1.2.4"/>
    </reaction>
</comment>
<comment type="pathway">
    <text evidence="1">Carbohydrate degradation; 2-deoxy-D-ribose 1-phosphate degradation; D-glyceraldehyde 3-phosphate and acetaldehyde from 2-deoxy-alpha-D-ribose 1-phosphate: step 2/2.</text>
</comment>
<comment type="subcellular location">
    <subcellularLocation>
        <location evidence="1">Cytoplasm</location>
    </subcellularLocation>
</comment>
<comment type="similarity">
    <text evidence="1">Belongs to the DeoC/FbaB aldolase family. DeoC type 1 subfamily.</text>
</comment>
<protein>
    <recommendedName>
        <fullName evidence="1">Deoxyribose-phosphate aldolase</fullName>
        <shortName evidence="1">DERA</shortName>
        <ecNumber evidence="1">4.1.2.4</ecNumber>
    </recommendedName>
    <alternativeName>
        <fullName evidence="1">2-deoxy-D-ribose 5-phosphate aldolase</fullName>
    </alternativeName>
    <alternativeName>
        <fullName evidence="1">Phosphodeoxyriboaldolase</fullName>
        <shortName evidence="1">Deoxyriboaldolase</shortName>
    </alternativeName>
</protein>